<organism>
    <name type="scientific">Bacillus licheniformis (strain ATCC 14580 / DSM 13 / JCM 2505 / CCUG 7422 / NBRC 12200 / NCIMB 9375 / NCTC 10341 / NRRL NRS-1264 / Gibson 46)</name>
    <dbReference type="NCBI Taxonomy" id="279010"/>
    <lineage>
        <taxon>Bacteria</taxon>
        <taxon>Bacillati</taxon>
        <taxon>Bacillota</taxon>
        <taxon>Bacilli</taxon>
        <taxon>Bacillales</taxon>
        <taxon>Bacillaceae</taxon>
        <taxon>Bacillus</taxon>
    </lineage>
</organism>
<comment type="function">
    <text evidence="1">Produces ATP from ADP in the presence of a proton gradient across the membrane. The gamma chain is believed to be important in regulating ATPase activity and the flow of protons through the CF(0) complex.</text>
</comment>
<comment type="subunit">
    <text evidence="1">F-type ATPases have 2 components, CF(1) - the catalytic core - and CF(0) - the membrane proton channel. CF(1) has five subunits: alpha(3), beta(3), gamma(1), delta(1), epsilon(1). CF(0) has three main subunits: a, b and c.</text>
</comment>
<comment type="subcellular location">
    <subcellularLocation>
        <location evidence="1">Cell membrane</location>
        <topology evidence="1">Peripheral membrane protein</topology>
    </subcellularLocation>
</comment>
<comment type="similarity">
    <text evidence="1">Belongs to the ATPase gamma chain family.</text>
</comment>
<evidence type="ECO:0000255" key="1">
    <source>
        <dbReference type="HAMAP-Rule" id="MF_00815"/>
    </source>
</evidence>
<protein>
    <recommendedName>
        <fullName evidence="1">ATP synthase gamma chain</fullName>
    </recommendedName>
    <alternativeName>
        <fullName evidence="1">ATP synthase F1 sector gamma subunit</fullName>
    </alternativeName>
    <alternativeName>
        <fullName evidence="1">F-ATPase gamma subunit</fullName>
    </alternativeName>
</protein>
<name>ATPG_BACLD</name>
<gene>
    <name evidence="1" type="primary">atpG</name>
    <name type="ordered locus">BLi03927</name>
    <name type="ordered locus">BL03999</name>
</gene>
<accession>Q65DX3</accession>
<accession>Q62PE4</accession>
<keyword id="KW-0066">ATP synthesis</keyword>
<keyword id="KW-1003">Cell membrane</keyword>
<keyword id="KW-0139">CF(1)</keyword>
<keyword id="KW-0375">Hydrogen ion transport</keyword>
<keyword id="KW-0406">Ion transport</keyword>
<keyword id="KW-0472">Membrane</keyword>
<keyword id="KW-1185">Reference proteome</keyword>
<keyword id="KW-0813">Transport</keyword>
<proteinExistence type="inferred from homology"/>
<sequence length="284" mass="31906">MASLRDIKSRIASNKKMSQITKAQEMVSASKLNRAENKAKSFVPYMEKMQEVVADIAVGYTGKHPMMSSRPVKRTGYLVITADRGLAGAFNANVLRKAYQRIQERHQSKDEYAVIAVGRMGRDFFKKRGIPVISEMTGIRDEVTFSEIKDLANSTVQMYIDETFDELYLFYNHFVSAISQEVTEKKLLPLTDIAPNKKKTSFEFEPDEEEILEVLLPQYAESLIFGALLDSKASEHAARMTAMRNATDNAKEIIADLELSYNRARQASITQEITEIVGGAAALE</sequence>
<feature type="chain" id="PRO_0000073230" description="ATP synthase gamma chain">
    <location>
        <begin position="1"/>
        <end position="284"/>
    </location>
</feature>
<reference key="1">
    <citation type="journal article" date="2004" name="J. Mol. Microbiol. Biotechnol.">
        <title>The complete genome sequence of Bacillus licheniformis DSM13, an organism with great industrial potential.</title>
        <authorList>
            <person name="Veith B."/>
            <person name="Herzberg C."/>
            <person name="Steckel S."/>
            <person name="Feesche J."/>
            <person name="Maurer K.H."/>
            <person name="Ehrenreich P."/>
            <person name="Baeumer S."/>
            <person name="Henne A."/>
            <person name="Liesegang H."/>
            <person name="Merkl R."/>
            <person name="Ehrenreich A."/>
            <person name="Gottschalk G."/>
        </authorList>
    </citation>
    <scope>NUCLEOTIDE SEQUENCE [LARGE SCALE GENOMIC DNA]</scope>
    <source>
        <strain>ATCC 14580 / DSM 13 / JCM 2505 / CCUG 7422 / NBRC 12200 / NCIMB 9375 / NCTC 10341 / NRRL NRS-1264 / Gibson 46</strain>
    </source>
</reference>
<reference key="2">
    <citation type="journal article" date="2004" name="Genome Biol.">
        <title>Complete genome sequence of the industrial bacterium Bacillus licheniformis and comparisons with closely related Bacillus species.</title>
        <authorList>
            <person name="Rey M.W."/>
            <person name="Ramaiya P."/>
            <person name="Nelson B.A."/>
            <person name="Brody-Karpin S.D."/>
            <person name="Zaretsky E.J."/>
            <person name="Tang M."/>
            <person name="Lopez de Leon A."/>
            <person name="Xiang H."/>
            <person name="Gusti V."/>
            <person name="Clausen I.G."/>
            <person name="Olsen P.B."/>
            <person name="Rasmussen M.D."/>
            <person name="Andersen J.T."/>
            <person name="Joergensen P.L."/>
            <person name="Larsen T.S."/>
            <person name="Sorokin A."/>
            <person name="Bolotin A."/>
            <person name="Lapidus A."/>
            <person name="Galleron N."/>
            <person name="Ehrlich S.D."/>
            <person name="Berka R.M."/>
        </authorList>
    </citation>
    <scope>NUCLEOTIDE SEQUENCE [LARGE SCALE GENOMIC DNA]</scope>
    <source>
        <strain>ATCC 14580 / DSM 13 / JCM 2505 / CCUG 7422 / NBRC 12200 / NCIMB 9375 / NCTC 10341 / NRRL NRS-1264 / Gibson 46</strain>
    </source>
</reference>
<dbReference type="EMBL" id="AE017333">
    <property type="protein sequence ID" value="AAU42741.1"/>
    <property type="molecule type" value="Genomic_DNA"/>
</dbReference>
<dbReference type="EMBL" id="CP000002">
    <property type="protein sequence ID" value="AAU25367.2"/>
    <property type="molecule type" value="Genomic_DNA"/>
</dbReference>
<dbReference type="RefSeq" id="WP_003186008.1">
    <property type="nucleotide sequence ID" value="NC_006322.1"/>
</dbReference>
<dbReference type="SMR" id="Q65DX3"/>
<dbReference type="STRING" id="279010.BL03999"/>
<dbReference type="GeneID" id="92859500"/>
<dbReference type="KEGG" id="bld:BLi03927"/>
<dbReference type="KEGG" id="bli:BL03999"/>
<dbReference type="eggNOG" id="COG0224">
    <property type="taxonomic scope" value="Bacteria"/>
</dbReference>
<dbReference type="HOGENOM" id="CLU_050669_0_1_9"/>
<dbReference type="Proteomes" id="UP000000606">
    <property type="component" value="Chromosome"/>
</dbReference>
<dbReference type="GO" id="GO:0005886">
    <property type="term" value="C:plasma membrane"/>
    <property type="evidence" value="ECO:0007669"/>
    <property type="project" value="UniProtKB-SubCell"/>
</dbReference>
<dbReference type="GO" id="GO:0045259">
    <property type="term" value="C:proton-transporting ATP synthase complex"/>
    <property type="evidence" value="ECO:0007669"/>
    <property type="project" value="UniProtKB-KW"/>
</dbReference>
<dbReference type="GO" id="GO:0005524">
    <property type="term" value="F:ATP binding"/>
    <property type="evidence" value="ECO:0007669"/>
    <property type="project" value="UniProtKB-UniRule"/>
</dbReference>
<dbReference type="GO" id="GO:0046933">
    <property type="term" value="F:proton-transporting ATP synthase activity, rotational mechanism"/>
    <property type="evidence" value="ECO:0007669"/>
    <property type="project" value="UniProtKB-UniRule"/>
</dbReference>
<dbReference type="GO" id="GO:0042777">
    <property type="term" value="P:proton motive force-driven plasma membrane ATP synthesis"/>
    <property type="evidence" value="ECO:0007669"/>
    <property type="project" value="UniProtKB-UniRule"/>
</dbReference>
<dbReference type="CDD" id="cd12151">
    <property type="entry name" value="F1-ATPase_gamma"/>
    <property type="match status" value="1"/>
</dbReference>
<dbReference type="FunFam" id="3.40.1380.10:FF:000002">
    <property type="entry name" value="ATP synthase gamma chain"/>
    <property type="match status" value="1"/>
</dbReference>
<dbReference type="Gene3D" id="3.40.1380.10">
    <property type="match status" value="1"/>
</dbReference>
<dbReference type="Gene3D" id="1.10.287.80">
    <property type="entry name" value="ATP synthase, gamma subunit, helix hairpin domain"/>
    <property type="match status" value="1"/>
</dbReference>
<dbReference type="HAMAP" id="MF_00815">
    <property type="entry name" value="ATP_synth_gamma_bact"/>
    <property type="match status" value="1"/>
</dbReference>
<dbReference type="InterPro" id="IPR035968">
    <property type="entry name" value="ATP_synth_F1_ATPase_gsu"/>
</dbReference>
<dbReference type="InterPro" id="IPR000131">
    <property type="entry name" value="ATP_synth_F1_gsu"/>
</dbReference>
<dbReference type="InterPro" id="IPR023632">
    <property type="entry name" value="ATP_synth_F1_gsu_CS"/>
</dbReference>
<dbReference type="NCBIfam" id="TIGR01146">
    <property type="entry name" value="ATPsyn_F1gamma"/>
    <property type="match status" value="1"/>
</dbReference>
<dbReference type="PANTHER" id="PTHR11693">
    <property type="entry name" value="ATP SYNTHASE GAMMA CHAIN"/>
    <property type="match status" value="1"/>
</dbReference>
<dbReference type="PANTHER" id="PTHR11693:SF22">
    <property type="entry name" value="ATP SYNTHASE SUBUNIT GAMMA, MITOCHONDRIAL"/>
    <property type="match status" value="1"/>
</dbReference>
<dbReference type="Pfam" id="PF00231">
    <property type="entry name" value="ATP-synt"/>
    <property type="match status" value="1"/>
</dbReference>
<dbReference type="PRINTS" id="PR00126">
    <property type="entry name" value="ATPASEGAMMA"/>
</dbReference>
<dbReference type="SUPFAM" id="SSF52943">
    <property type="entry name" value="ATP synthase (F1-ATPase), gamma subunit"/>
    <property type="match status" value="1"/>
</dbReference>
<dbReference type="PROSITE" id="PS00153">
    <property type="entry name" value="ATPASE_GAMMA"/>
    <property type="match status" value="1"/>
</dbReference>